<proteinExistence type="inferred from homology"/>
<accession>A4T1N5</accession>
<comment type="function">
    <text evidence="1">Forms part of the ribosomal stalk, playing a central role in the interaction of the ribosome with GTP-bound translation factors.</text>
</comment>
<comment type="subunit">
    <text evidence="1">Part of the ribosomal stalk of the 50S ribosomal subunit. The N-terminus interacts with L11 and the large rRNA to form the base of the stalk. The C-terminus forms an elongated spine to which L12 dimers bind in a sequential fashion forming a multimeric L10(L12)X complex.</text>
</comment>
<comment type="similarity">
    <text evidence="1">Belongs to the universal ribosomal protein uL10 family.</text>
</comment>
<dbReference type="EMBL" id="CP000656">
    <property type="protein sequence ID" value="ABP47567.1"/>
    <property type="molecule type" value="Genomic_DNA"/>
</dbReference>
<dbReference type="SMR" id="A4T1N5"/>
<dbReference type="STRING" id="350054.Mflv_5101"/>
<dbReference type="KEGG" id="mgi:Mflv_5101"/>
<dbReference type="eggNOG" id="COG0244">
    <property type="taxonomic scope" value="Bacteria"/>
</dbReference>
<dbReference type="HOGENOM" id="CLU_092227_1_0_11"/>
<dbReference type="OrthoDB" id="3186107at2"/>
<dbReference type="GO" id="GO:0015934">
    <property type="term" value="C:large ribosomal subunit"/>
    <property type="evidence" value="ECO:0007669"/>
    <property type="project" value="InterPro"/>
</dbReference>
<dbReference type="GO" id="GO:0070180">
    <property type="term" value="F:large ribosomal subunit rRNA binding"/>
    <property type="evidence" value="ECO:0007669"/>
    <property type="project" value="UniProtKB-UniRule"/>
</dbReference>
<dbReference type="GO" id="GO:0003735">
    <property type="term" value="F:structural constituent of ribosome"/>
    <property type="evidence" value="ECO:0007669"/>
    <property type="project" value="InterPro"/>
</dbReference>
<dbReference type="GO" id="GO:0006412">
    <property type="term" value="P:translation"/>
    <property type="evidence" value="ECO:0007669"/>
    <property type="project" value="UniProtKB-UniRule"/>
</dbReference>
<dbReference type="CDD" id="cd05797">
    <property type="entry name" value="Ribosomal_L10"/>
    <property type="match status" value="1"/>
</dbReference>
<dbReference type="FunFam" id="3.30.70.1730:FF:000003">
    <property type="entry name" value="50S ribosomal protein L10"/>
    <property type="match status" value="1"/>
</dbReference>
<dbReference type="Gene3D" id="3.30.70.1730">
    <property type="match status" value="1"/>
</dbReference>
<dbReference type="HAMAP" id="MF_00362">
    <property type="entry name" value="Ribosomal_uL10"/>
    <property type="match status" value="1"/>
</dbReference>
<dbReference type="InterPro" id="IPR001790">
    <property type="entry name" value="Ribosomal_uL10"/>
</dbReference>
<dbReference type="InterPro" id="IPR043141">
    <property type="entry name" value="Ribosomal_uL10-like_sf"/>
</dbReference>
<dbReference type="InterPro" id="IPR022973">
    <property type="entry name" value="Ribosomal_uL10_bac"/>
</dbReference>
<dbReference type="InterPro" id="IPR047865">
    <property type="entry name" value="Ribosomal_uL10_bac_type"/>
</dbReference>
<dbReference type="InterPro" id="IPR002363">
    <property type="entry name" value="Ribosomal_uL10_CS_bac"/>
</dbReference>
<dbReference type="NCBIfam" id="NF000955">
    <property type="entry name" value="PRK00099.1-1"/>
    <property type="match status" value="1"/>
</dbReference>
<dbReference type="PANTHER" id="PTHR11560">
    <property type="entry name" value="39S RIBOSOMAL PROTEIN L10, MITOCHONDRIAL"/>
    <property type="match status" value="1"/>
</dbReference>
<dbReference type="Pfam" id="PF00466">
    <property type="entry name" value="Ribosomal_L10"/>
    <property type="match status" value="1"/>
</dbReference>
<dbReference type="SUPFAM" id="SSF160369">
    <property type="entry name" value="Ribosomal protein L10-like"/>
    <property type="match status" value="1"/>
</dbReference>
<dbReference type="PROSITE" id="PS01109">
    <property type="entry name" value="RIBOSOMAL_L10"/>
    <property type="match status" value="1"/>
</dbReference>
<organism>
    <name type="scientific">Mycolicibacterium gilvum (strain PYR-GCK)</name>
    <name type="common">Mycobacterium gilvum (strain PYR-GCK)</name>
    <dbReference type="NCBI Taxonomy" id="350054"/>
    <lineage>
        <taxon>Bacteria</taxon>
        <taxon>Bacillati</taxon>
        <taxon>Actinomycetota</taxon>
        <taxon>Actinomycetes</taxon>
        <taxon>Mycobacteriales</taxon>
        <taxon>Mycobacteriaceae</taxon>
        <taxon>Mycolicibacterium</taxon>
    </lineage>
</organism>
<keyword id="KW-0687">Ribonucleoprotein</keyword>
<keyword id="KW-0689">Ribosomal protein</keyword>
<keyword id="KW-0694">RNA-binding</keyword>
<keyword id="KW-0699">rRNA-binding</keyword>
<name>RL10_MYCGI</name>
<protein>
    <recommendedName>
        <fullName evidence="1">Large ribosomal subunit protein uL10</fullName>
    </recommendedName>
    <alternativeName>
        <fullName evidence="2">50S ribosomal protein L10</fullName>
    </alternativeName>
</protein>
<gene>
    <name evidence="1" type="primary">rplJ</name>
    <name type="ordered locus">Mflv_5101</name>
</gene>
<feature type="chain" id="PRO_1000079550" description="Large ribosomal subunit protein uL10">
    <location>
        <begin position="1"/>
        <end position="179"/>
    </location>
</feature>
<reference key="1">
    <citation type="submission" date="2007-04" db="EMBL/GenBank/DDBJ databases">
        <title>Complete sequence of chromosome of Mycobacterium gilvum PYR-GCK.</title>
        <authorList>
            <consortium name="US DOE Joint Genome Institute"/>
            <person name="Copeland A."/>
            <person name="Lucas S."/>
            <person name="Lapidus A."/>
            <person name="Barry K."/>
            <person name="Detter J.C."/>
            <person name="Glavina del Rio T."/>
            <person name="Hammon N."/>
            <person name="Israni S."/>
            <person name="Dalin E."/>
            <person name="Tice H."/>
            <person name="Pitluck S."/>
            <person name="Chain P."/>
            <person name="Malfatti S."/>
            <person name="Shin M."/>
            <person name="Vergez L."/>
            <person name="Schmutz J."/>
            <person name="Larimer F."/>
            <person name="Land M."/>
            <person name="Hauser L."/>
            <person name="Kyrpides N."/>
            <person name="Mikhailova N."/>
            <person name="Miller C."/>
            <person name="Richardson P."/>
        </authorList>
    </citation>
    <scope>NUCLEOTIDE SEQUENCE [LARGE SCALE GENOMIC DNA]</scope>
    <source>
        <strain>PYR-GCK</strain>
    </source>
</reference>
<sequence length="179" mass="18620">MAKADKATAVADIAEKFKESTATVVTEYRGLTVSNLAELRRSLGSSTTYTVAKNTLVKRAAAEAGIEGLDELFVGPTAIAFIEGEPVDAAKALKKFAKDNKALVVKGGYMDGRALSVSEVERIADLESREVLLSKFAGALKAKQSQAAALFVAPASQVARLAAALQEKKSAGDSAESAA</sequence>
<evidence type="ECO:0000255" key="1">
    <source>
        <dbReference type="HAMAP-Rule" id="MF_00362"/>
    </source>
</evidence>
<evidence type="ECO:0000305" key="2"/>